<reference key="1">
    <citation type="submission" date="2008-02" db="EMBL/GenBank/DDBJ databases">
        <title>Complete sequence of chromosome 1 of Burkholderia cenocepacia MC0-3.</title>
        <authorList>
            <person name="Copeland A."/>
            <person name="Lucas S."/>
            <person name="Lapidus A."/>
            <person name="Barry K."/>
            <person name="Bruce D."/>
            <person name="Goodwin L."/>
            <person name="Glavina del Rio T."/>
            <person name="Dalin E."/>
            <person name="Tice H."/>
            <person name="Pitluck S."/>
            <person name="Chain P."/>
            <person name="Malfatti S."/>
            <person name="Shin M."/>
            <person name="Vergez L."/>
            <person name="Schmutz J."/>
            <person name="Larimer F."/>
            <person name="Land M."/>
            <person name="Hauser L."/>
            <person name="Kyrpides N."/>
            <person name="Mikhailova N."/>
            <person name="Tiedje J."/>
            <person name="Richardson P."/>
        </authorList>
    </citation>
    <scope>NUCLEOTIDE SEQUENCE [LARGE SCALE GENOMIC DNA]</scope>
    <source>
        <strain>MC0-3</strain>
    </source>
</reference>
<sequence>MKTAQELRVGNVVQIGSEAWVIAKAEYNKSGRNSAVVKMKMKNLLSNAGQESVYKADDKFEVVVLDRKEVTYSYFADPMYVFMDADYNQYEVEAEMMGEALNYLEDGMACEVVFYNEKAISVELPTVLVREITYTEPAVKGDTSSGKVLKNAKLATGFELQVPLFCNTGDKIEIDTRTNEYRSRA</sequence>
<organism>
    <name type="scientific">Burkholderia orbicola (strain MC0-3)</name>
    <dbReference type="NCBI Taxonomy" id="406425"/>
    <lineage>
        <taxon>Bacteria</taxon>
        <taxon>Pseudomonadati</taxon>
        <taxon>Pseudomonadota</taxon>
        <taxon>Betaproteobacteria</taxon>
        <taxon>Burkholderiales</taxon>
        <taxon>Burkholderiaceae</taxon>
        <taxon>Burkholderia</taxon>
        <taxon>Burkholderia cepacia complex</taxon>
        <taxon>Burkholderia orbicola</taxon>
    </lineage>
</organism>
<protein>
    <recommendedName>
        <fullName evidence="1">Elongation factor P</fullName>
        <shortName evidence="1">EF-P</shortName>
    </recommendedName>
</protein>
<comment type="function">
    <text evidence="1">Involved in peptide bond synthesis. Stimulates efficient translation and peptide-bond synthesis on native or reconstituted 70S ribosomes in vitro. Probably functions indirectly by altering the affinity of the ribosome for aminoacyl-tRNA, thus increasing their reactivity as acceptors for peptidyl transferase.</text>
</comment>
<comment type="pathway">
    <text evidence="1">Protein biosynthesis; polypeptide chain elongation.</text>
</comment>
<comment type="subcellular location">
    <subcellularLocation>
        <location evidence="1">Cytoplasm</location>
    </subcellularLocation>
</comment>
<comment type="similarity">
    <text evidence="1">Belongs to the elongation factor P family.</text>
</comment>
<evidence type="ECO:0000255" key="1">
    <source>
        <dbReference type="HAMAP-Rule" id="MF_00141"/>
    </source>
</evidence>
<dbReference type="EMBL" id="CP000958">
    <property type="protein sequence ID" value="ACA90276.1"/>
    <property type="molecule type" value="Genomic_DNA"/>
</dbReference>
<dbReference type="RefSeq" id="WP_006476487.1">
    <property type="nucleotide sequence ID" value="NC_010508.1"/>
</dbReference>
<dbReference type="SMR" id="B1JYC0"/>
<dbReference type="GeneID" id="83047893"/>
<dbReference type="KEGG" id="bcm:Bcenmc03_1099"/>
<dbReference type="HOGENOM" id="CLU_074944_2_1_4"/>
<dbReference type="UniPathway" id="UPA00345"/>
<dbReference type="Proteomes" id="UP000002169">
    <property type="component" value="Chromosome 1"/>
</dbReference>
<dbReference type="GO" id="GO:0005737">
    <property type="term" value="C:cytoplasm"/>
    <property type="evidence" value="ECO:0007669"/>
    <property type="project" value="UniProtKB-SubCell"/>
</dbReference>
<dbReference type="GO" id="GO:0003746">
    <property type="term" value="F:translation elongation factor activity"/>
    <property type="evidence" value="ECO:0007669"/>
    <property type="project" value="UniProtKB-UniRule"/>
</dbReference>
<dbReference type="GO" id="GO:0043043">
    <property type="term" value="P:peptide biosynthetic process"/>
    <property type="evidence" value="ECO:0007669"/>
    <property type="project" value="InterPro"/>
</dbReference>
<dbReference type="CDD" id="cd04470">
    <property type="entry name" value="S1_EF-P_repeat_1"/>
    <property type="match status" value="1"/>
</dbReference>
<dbReference type="CDD" id="cd05794">
    <property type="entry name" value="S1_EF-P_repeat_2"/>
    <property type="match status" value="1"/>
</dbReference>
<dbReference type="FunFam" id="2.30.30.30:FF:000003">
    <property type="entry name" value="Elongation factor P"/>
    <property type="match status" value="1"/>
</dbReference>
<dbReference type="FunFam" id="2.40.50.140:FF:000004">
    <property type="entry name" value="Elongation factor P"/>
    <property type="match status" value="1"/>
</dbReference>
<dbReference type="FunFam" id="2.40.50.140:FF:000009">
    <property type="entry name" value="Elongation factor P"/>
    <property type="match status" value="1"/>
</dbReference>
<dbReference type="Gene3D" id="2.30.30.30">
    <property type="match status" value="1"/>
</dbReference>
<dbReference type="Gene3D" id="2.40.50.140">
    <property type="entry name" value="Nucleic acid-binding proteins"/>
    <property type="match status" value="2"/>
</dbReference>
<dbReference type="HAMAP" id="MF_00141">
    <property type="entry name" value="EF_P"/>
    <property type="match status" value="1"/>
</dbReference>
<dbReference type="InterPro" id="IPR015365">
    <property type="entry name" value="Elong-fact-P_C"/>
</dbReference>
<dbReference type="InterPro" id="IPR012340">
    <property type="entry name" value="NA-bd_OB-fold"/>
</dbReference>
<dbReference type="InterPro" id="IPR014722">
    <property type="entry name" value="Rib_uL2_dom2"/>
</dbReference>
<dbReference type="InterPro" id="IPR020599">
    <property type="entry name" value="Transl_elong_fac_P/YeiP"/>
</dbReference>
<dbReference type="InterPro" id="IPR013185">
    <property type="entry name" value="Transl_elong_KOW-like"/>
</dbReference>
<dbReference type="InterPro" id="IPR001059">
    <property type="entry name" value="Transl_elong_P/YeiP_cen"/>
</dbReference>
<dbReference type="InterPro" id="IPR013852">
    <property type="entry name" value="Transl_elong_P/YeiP_CS"/>
</dbReference>
<dbReference type="InterPro" id="IPR011768">
    <property type="entry name" value="Transl_elongation_fac_P"/>
</dbReference>
<dbReference type="InterPro" id="IPR008991">
    <property type="entry name" value="Translation_prot_SH3-like_sf"/>
</dbReference>
<dbReference type="NCBIfam" id="TIGR00038">
    <property type="entry name" value="efp"/>
    <property type="match status" value="1"/>
</dbReference>
<dbReference type="NCBIfam" id="NF001810">
    <property type="entry name" value="PRK00529.1"/>
    <property type="match status" value="1"/>
</dbReference>
<dbReference type="PANTHER" id="PTHR30053">
    <property type="entry name" value="ELONGATION FACTOR P"/>
    <property type="match status" value="1"/>
</dbReference>
<dbReference type="PANTHER" id="PTHR30053:SF12">
    <property type="entry name" value="ELONGATION FACTOR P (EF-P) FAMILY PROTEIN"/>
    <property type="match status" value="1"/>
</dbReference>
<dbReference type="Pfam" id="PF01132">
    <property type="entry name" value="EFP"/>
    <property type="match status" value="1"/>
</dbReference>
<dbReference type="Pfam" id="PF08207">
    <property type="entry name" value="EFP_N"/>
    <property type="match status" value="1"/>
</dbReference>
<dbReference type="Pfam" id="PF09285">
    <property type="entry name" value="Elong-fact-P_C"/>
    <property type="match status" value="1"/>
</dbReference>
<dbReference type="PIRSF" id="PIRSF005901">
    <property type="entry name" value="EF-P"/>
    <property type="match status" value="1"/>
</dbReference>
<dbReference type="SMART" id="SM01185">
    <property type="entry name" value="EFP"/>
    <property type="match status" value="1"/>
</dbReference>
<dbReference type="SMART" id="SM00841">
    <property type="entry name" value="Elong-fact-P_C"/>
    <property type="match status" value="1"/>
</dbReference>
<dbReference type="SUPFAM" id="SSF50249">
    <property type="entry name" value="Nucleic acid-binding proteins"/>
    <property type="match status" value="2"/>
</dbReference>
<dbReference type="SUPFAM" id="SSF50104">
    <property type="entry name" value="Translation proteins SH3-like domain"/>
    <property type="match status" value="1"/>
</dbReference>
<dbReference type="PROSITE" id="PS01275">
    <property type="entry name" value="EFP"/>
    <property type="match status" value="1"/>
</dbReference>
<accession>B1JYC0</accession>
<proteinExistence type="inferred from homology"/>
<name>EFP_BURO0</name>
<feature type="chain" id="PRO_1000096129" description="Elongation factor P">
    <location>
        <begin position="1"/>
        <end position="185"/>
    </location>
</feature>
<gene>
    <name evidence="1" type="primary">efp</name>
    <name type="ordered locus">Bcenmc03_1099</name>
</gene>
<keyword id="KW-0963">Cytoplasm</keyword>
<keyword id="KW-0251">Elongation factor</keyword>
<keyword id="KW-0648">Protein biosynthesis</keyword>